<dbReference type="EC" id="2.3.1.86"/>
<dbReference type="EC" id="1.1.1.100"/>
<dbReference type="EC" id="2.3.1.41"/>
<dbReference type="EMBL" id="J03936">
    <property type="protein sequence ID" value="AAA34601.1"/>
    <property type="molecule type" value="Genomic_DNA"/>
</dbReference>
<dbReference type="EMBL" id="X76890">
    <property type="protein sequence ID" value="CAA54218.1"/>
    <property type="molecule type" value="Genomic_DNA"/>
</dbReference>
<dbReference type="EMBL" id="X94561">
    <property type="protein sequence ID" value="CAA64256.1"/>
    <property type="molecule type" value="Genomic_DNA"/>
</dbReference>
<dbReference type="EMBL" id="Z73586">
    <property type="protein sequence ID" value="CAA97947.1"/>
    <property type="molecule type" value="Genomic_DNA"/>
</dbReference>
<dbReference type="EMBL" id="Z73587">
    <property type="protein sequence ID" value="CAA97948.1"/>
    <property type="molecule type" value="Genomic_DNA"/>
</dbReference>
<dbReference type="EMBL" id="BK006949">
    <property type="protein sequence ID" value="DAA11205.1"/>
    <property type="molecule type" value="Genomic_DNA"/>
</dbReference>
<dbReference type="PIR" id="S61703">
    <property type="entry name" value="S61703"/>
</dbReference>
<dbReference type="RefSeq" id="NP_015093.1">
    <property type="nucleotide sequence ID" value="NM_001184045.1"/>
</dbReference>
<dbReference type="PDB" id="2ML8">
    <property type="method" value="NMR"/>
    <property type="chains" value="A=138-302"/>
</dbReference>
<dbReference type="PDB" id="2PFF">
    <property type="method" value="X-ray"/>
    <property type="resolution" value="4.00 A"/>
    <property type="chains" value="A/D/G=671-1744"/>
</dbReference>
<dbReference type="PDB" id="2UV8">
    <property type="method" value="X-ray"/>
    <property type="resolution" value="3.10 A"/>
    <property type="chains" value="A/B/C=1-1887"/>
</dbReference>
<dbReference type="PDB" id="2VKZ">
    <property type="method" value="X-ray"/>
    <property type="resolution" value="4.00 A"/>
    <property type="chains" value="A/B/C=1-1887"/>
</dbReference>
<dbReference type="PDB" id="2WAS">
    <property type="method" value="X-ray"/>
    <property type="resolution" value="1.90 A"/>
    <property type="chains" value="A/B/C/D/E/F=1766-1887"/>
</dbReference>
<dbReference type="PDB" id="2WAT">
    <property type="method" value="X-ray"/>
    <property type="resolution" value="2.20 A"/>
    <property type="chains" value="A/B/C/D/E/F=1766-1887"/>
</dbReference>
<dbReference type="PDB" id="3HMJ">
    <property type="method" value="X-ray"/>
    <property type="resolution" value="4.00 A"/>
    <property type="chains" value="A/B/C=1-1887"/>
</dbReference>
<dbReference type="PDB" id="6JSH">
    <property type="method" value="EM"/>
    <property type="resolution" value="5.10 A"/>
    <property type="chains" value="C/H/I=1443-1513"/>
</dbReference>
<dbReference type="PDB" id="6JSI">
    <property type="method" value="EM"/>
    <property type="resolution" value="4.70 A"/>
    <property type="chains" value="C/H/I=1443-1513"/>
</dbReference>
<dbReference type="PDB" id="6QL5">
    <property type="method" value="EM"/>
    <property type="resolution" value="2.80 A"/>
    <property type="chains" value="A/B/C/D/E/F=1-1887"/>
</dbReference>
<dbReference type="PDB" id="6QL6">
    <property type="method" value="EM"/>
    <property type="resolution" value="2.90 A"/>
    <property type="chains" value="A/B/C/D/E/F=1-1887"/>
</dbReference>
<dbReference type="PDB" id="6QL7">
    <property type="method" value="X-ray"/>
    <property type="resolution" value="4.60 A"/>
    <property type="chains" value="A/B/C/D/E/F/a/b/c/d/e/f=1-1887"/>
</dbReference>
<dbReference type="PDB" id="6QL9">
    <property type="method" value="X-ray"/>
    <property type="resolution" value="2.82 A"/>
    <property type="chains" value="A/B/C/D/E/F=1-1887"/>
</dbReference>
<dbReference type="PDB" id="6TA1">
    <property type="method" value="EM"/>
    <property type="resolution" value="3.10 A"/>
    <property type="chains" value="A/B/D/F/I/K=1-1887"/>
</dbReference>
<dbReference type="PDB" id="6WC7">
    <property type="method" value="EM"/>
    <property type="resolution" value="5.80 A"/>
    <property type="chains" value="A=1-1887"/>
</dbReference>
<dbReference type="PDB" id="8PRV">
    <property type="method" value="EM"/>
    <property type="resolution" value="2.90 A"/>
    <property type="chains" value="A/B=1-1887"/>
</dbReference>
<dbReference type="PDB" id="8PRW">
    <property type="method" value="EM"/>
    <property type="resolution" value="1.90 A"/>
    <property type="chains" value="A/B/C/D/E/F=1-1887"/>
</dbReference>
<dbReference type="PDB" id="8PS1">
    <property type="method" value="EM"/>
    <property type="resolution" value="2.80 A"/>
    <property type="chains" value="A/B=1-1887"/>
</dbReference>
<dbReference type="PDB" id="8PS2">
    <property type="method" value="EM"/>
    <property type="resolution" value="2.90 A"/>
    <property type="chains" value="A/B=1-1887"/>
</dbReference>
<dbReference type="PDB" id="8PS8">
    <property type="method" value="EM"/>
    <property type="resolution" value="4.00 A"/>
    <property type="chains" value="A/B=1-1887"/>
</dbReference>
<dbReference type="PDB" id="8PS9">
    <property type="method" value="EM"/>
    <property type="resolution" value="2.90 A"/>
    <property type="chains" value="A/B=1-1887"/>
</dbReference>
<dbReference type="PDB" id="8PSA">
    <property type="method" value="EM"/>
    <property type="resolution" value="3.60 A"/>
    <property type="chains" value="A/B=1-1887"/>
</dbReference>
<dbReference type="PDB" id="8PSF">
    <property type="method" value="EM"/>
    <property type="resolution" value="2.80 A"/>
    <property type="chains" value="A/B=1-1887"/>
</dbReference>
<dbReference type="PDB" id="8PSG">
    <property type="method" value="EM"/>
    <property type="resolution" value="3.70 A"/>
    <property type="chains" value="A/B=1-1887"/>
</dbReference>
<dbReference type="PDB" id="8PSJ">
    <property type="method" value="EM"/>
    <property type="resolution" value="3.40 A"/>
    <property type="chains" value="A/B=1-1887"/>
</dbReference>
<dbReference type="PDB" id="8PSK">
    <property type="method" value="EM"/>
    <property type="resolution" value="2.80 A"/>
    <property type="chains" value="A/B=1-1887"/>
</dbReference>
<dbReference type="PDB" id="8PSL">
    <property type="method" value="EM"/>
    <property type="resolution" value="3.70 A"/>
    <property type="chains" value="A/B=1-1887"/>
</dbReference>
<dbReference type="PDB" id="8PSM">
    <property type="method" value="EM"/>
    <property type="resolution" value="3.10 A"/>
    <property type="chains" value="A/B=1-1887"/>
</dbReference>
<dbReference type="PDB" id="8PSP">
    <property type="method" value="EM"/>
    <property type="resolution" value="2.90 A"/>
    <property type="chains" value="A/B=1-1887"/>
</dbReference>
<dbReference type="PDBsum" id="2ML8"/>
<dbReference type="PDBsum" id="2PFF"/>
<dbReference type="PDBsum" id="2UV8"/>
<dbReference type="PDBsum" id="2VKZ"/>
<dbReference type="PDBsum" id="2WAS"/>
<dbReference type="PDBsum" id="2WAT"/>
<dbReference type="PDBsum" id="3HMJ"/>
<dbReference type="PDBsum" id="6JSH"/>
<dbReference type="PDBsum" id="6JSI"/>
<dbReference type="PDBsum" id="6QL5"/>
<dbReference type="PDBsum" id="6QL6"/>
<dbReference type="PDBsum" id="6QL7"/>
<dbReference type="PDBsum" id="6QL9"/>
<dbReference type="PDBsum" id="6TA1"/>
<dbReference type="PDBsum" id="6WC7"/>
<dbReference type="PDBsum" id="8PRV"/>
<dbReference type="PDBsum" id="8PRW"/>
<dbReference type="PDBsum" id="8PS1"/>
<dbReference type="PDBsum" id="8PS2"/>
<dbReference type="PDBsum" id="8PS8"/>
<dbReference type="PDBsum" id="8PS9"/>
<dbReference type="PDBsum" id="8PSA"/>
<dbReference type="PDBsum" id="8PSF"/>
<dbReference type="PDBsum" id="8PSG"/>
<dbReference type="PDBsum" id="8PSJ"/>
<dbReference type="PDBsum" id="8PSK"/>
<dbReference type="PDBsum" id="8PSL"/>
<dbReference type="PDBsum" id="8PSM"/>
<dbReference type="PDBsum" id="8PSP"/>
<dbReference type="BMRB" id="P19097"/>
<dbReference type="EMDB" id="EMD-10420"/>
<dbReference type="EMDB" id="EMD-17839"/>
<dbReference type="EMDB" id="EMD-17840"/>
<dbReference type="EMDB" id="EMD-17842"/>
<dbReference type="EMDB" id="EMD-17843"/>
<dbReference type="EMDB" id="EMD-17846"/>
<dbReference type="EMDB" id="EMD-17847"/>
<dbReference type="EMDB" id="EMD-17848"/>
<dbReference type="EMDB" id="EMD-17851"/>
<dbReference type="EMDB" id="EMD-17852"/>
<dbReference type="EMDB" id="EMD-17853"/>
<dbReference type="EMDB" id="EMD-17854"/>
<dbReference type="EMDB" id="EMD-17855"/>
<dbReference type="EMDB" id="EMD-17856"/>
<dbReference type="EMDB" id="EMD-17859"/>
<dbReference type="EMDB" id="EMD-19477"/>
<dbReference type="EMDB" id="EMD-21602"/>
<dbReference type="EMDB" id="EMD-4577"/>
<dbReference type="EMDB" id="EMD-4578"/>
<dbReference type="EMDB" id="EMD-9881"/>
<dbReference type="EMDB" id="EMD-9882"/>
<dbReference type="SMR" id="P19097"/>
<dbReference type="BioGRID" id="35931">
    <property type="interactions" value="431"/>
</dbReference>
<dbReference type="ComplexPortal" id="CPX-1162">
    <property type="entry name" value="Fatty-acyl-CoA synthase"/>
</dbReference>
<dbReference type="DIP" id="DIP-960N"/>
<dbReference type="FunCoup" id="P19097">
    <property type="interactions" value="418"/>
</dbReference>
<dbReference type="IntAct" id="P19097">
    <property type="interactions" value="24"/>
</dbReference>
<dbReference type="MINT" id="P19097"/>
<dbReference type="STRING" id="4932.YPL231W"/>
<dbReference type="GlyGen" id="P19097">
    <property type="glycosylation" value="1 site"/>
</dbReference>
<dbReference type="iPTMnet" id="P19097"/>
<dbReference type="PaxDb" id="4932-YPL231W"/>
<dbReference type="PeptideAtlas" id="P19097"/>
<dbReference type="TopDownProteomics" id="P19097"/>
<dbReference type="EnsemblFungi" id="YPL231W_mRNA">
    <property type="protein sequence ID" value="YPL231W"/>
    <property type="gene ID" value="YPL231W"/>
</dbReference>
<dbReference type="GeneID" id="855845"/>
<dbReference type="KEGG" id="sce:YPL231W"/>
<dbReference type="AGR" id="SGD:S000006152"/>
<dbReference type="SGD" id="S000006152">
    <property type="gene designation" value="FAS2"/>
</dbReference>
<dbReference type="VEuPathDB" id="FungiDB:YPL231W"/>
<dbReference type="eggNOG" id="ENOG502QQJX">
    <property type="taxonomic scope" value="Eukaryota"/>
</dbReference>
<dbReference type="GeneTree" id="ENSGT00940000176444"/>
<dbReference type="HOGENOM" id="CLU_000114_0_0_1"/>
<dbReference type="InParanoid" id="P19097"/>
<dbReference type="OMA" id="FPTLPDW"/>
<dbReference type="OrthoDB" id="4251012at2759"/>
<dbReference type="BioCyc" id="MetaCyc:YPL231W-MONOMER"/>
<dbReference type="BioCyc" id="YEAST:YPL231W-MONOMER"/>
<dbReference type="BRENDA" id="2.3.1.86">
    <property type="organism ID" value="984"/>
</dbReference>
<dbReference type="SABIO-RK" id="P19097"/>
<dbReference type="BioGRID-ORCS" id="855845">
    <property type="hits" value="0 hits in 10 CRISPR screens"/>
</dbReference>
<dbReference type="CD-CODE" id="67785C55">
    <property type="entry name" value="Hypersomatic shock foci"/>
</dbReference>
<dbReference type="CD-CODE" id="E03F929F">
    <property type="entry name" value="Stress granule"/>
</dbReference>
<dbReference type="EvolutionaryTrace" id="P19097"/>
<dbReference type="PRO" id="PR:P19097"/>
<dbReference type="Proteomes" id="UP000002311">
    <property type="component" value="Chromosome XVI"/>
</dbReference>
<dbReference type="RNAct" id="P19097">
    <property type="molecule type" value="protein"/>
</dbReference>
<dbReference type="GO" id="GO:0005829">
    <property type="term" value="C:cytosol"/>
    <property type="evidence" value="ECO:0000314"/>
    <property type="project" value="SGD"/>
</dbReference>
<dbReference type="GO" id="GO:0005835">
    <property type="term" value="C:fatty acid synthase complex"/>
    <property type="evidence" value="ECO:0000314"/>
    <property type="project" value="SGD"/>
</dbReference>
<dbReference type="GO" id="GO:0005739">
    <property type="term" value="C:mitochondrion"/>
    <property type="evidence" value="ECO:0007005"/>
    <property type="project" value="SGD"/>
</dbReference>
<dbReference type="GO" id="GO:0004316">
    <property type="term" value="F:3-oxoacyl-[acyl-carrier-protein] reductase (NADPH) activity"/>
    <property type="evidence" value="ECO:0000314"/>
    <property type="project" value="SGD"/>
</dbReference>
<dbReference type="GO" id="GO:0004315">
    <property type="term" value="F:3-oxoacyl-[acyl-carrier-protein] synthase activity"/>
    <property type="evidence" value="ECO:0000315"/>
    <property type="project" value="SGD"/>
</dbReference>
<dbReference type="GO" id="GO:0004312">
    <property type="term" value="F:fatty acid synthase activity"/>
    <property type="evidence" value="ECO:0007669"/>
    <property type="project" value="InterPro"/>
</dbReference>
<dbReference type="GO" id="GO:0004321">
    <property type="term" value="F:fatty-acyl-CoA synthase activity"/>
    <property type="evidence" value="ECO:0007669"/>
    <property type="project" value="UniProtKB-EC"/>
</dbReference>
<dbReference type="GO" id="GO:0008897">
    <property type="term" value="F:holo-[acyl-carrier-protein] synthase activity"/>
    <property type="evidence" value="ECO:0000315"/>
    <property type="project" value="SGD"/>
</dbReference>
<dbReference type="GO" id="GO:0000287">
    <property type="term" value="F:magnesium ion binding"/>
    <property type="evidence" value="ECO:0007669"/>
    <property type="project" value="InterPro"/>
</dbReference>
<dbReference type="GO" id="GO:0042759">
    <property type="term" value="P:long-chain fatty acid biosynthetic process"/>
    <property type="evidence" value="ECO:0000315"/>
    <property type="project" value="SGD"/>
</dbReference>
<dbReference type="CDD" id="cd00828">
    <property type="entry name" value="elong_cond_enzymes"/>
    <property type="match status" value="1"/>
</dbReference>
<dbReference type="CDD" id="cd08950">
    <property type="entry name" value="KR_fFAS_SDR_c_like"/>
    <property type="match status" value="1"/>
</dbReference>
<dbReference type="FunFam" id="3.90.470.20:FF:000005">
    <property type="entry name" value="Fatty acid synthase alpha subunit FasA"/>
    <property type="match status" value="1"/>
</dbReference>
<dbReference type="FunFam" id="3.30.70.2490:FF:000001">
    <property type="entry name" value="Fatty acid synthase subunit alpha"/>
    <property type="match status" value="1"/>
</dbReference>
<dbReference type="FunFam" id="3.90.25.70:FF:000001">
    <property type="entry name" value="Fatty acid synthase subunit alpha"/>
    <property type="match status" value="1"/>
</dbReference>
<dbReference type="Gene3D" id="3.30.70.2490">
    <property type="match status" value="1"/>
</dbReference>
<dbReference type="Gene3D" id="3.40.47.10">
    <property type="match status" value="1"/>
</dbReference>
<dbReference type="Gene3D" id="3.90.25.70">
    <property type="match status" value="1"/>
</dbReference>
<dbReference type="Gene3D" id="6.10.140.1410">
    <property type="match status" value="1"/>
</dbReference>
<dbReference type="Gene3D" id="6.10.250.1930">
    <property type="match status" value="1"/>
</dbReference>
<dbReference type="Gene3D" id="3.90.470.20">
    <property type="entry name" value="4'-phosphopantetheinyl transferase domain"/>
    <property type="match status" value="1"/>
</dbReference>
<dbReference type="Gene3D" id="3.40.50.720">
    <property type="entry name" value="NAD(P)-binding Rossmann-like Domain"/>
    <property type="match status" value="1"/>
</dbReference>
<dbReference type="HAMAP" id="MF_00101">
    <property type="entry name" value="AcpS"/>
    <property type="match status" value="1"/>
</dbReference>
<dbReference type="InterPro" id="IPR008278">
    <property type="entry name" value="4-PPantetheinyl_Trfase_dom"/>
</dbReference>
<dbReference type="InterPro" id="IPR037143">
    <property type="entry name" value="4-PPantetheinyl_Trfase_dom_sf"/>
</dbReference>
<dbReference type="InterPro" id="IPR002582">
    <property type="entry name" value="ACPS"/>
</dbReference>
<dbReference type="InterPro" id="IPR016035">
    <property type="entry name" value="Acyl_Trfase/lysoPLipase"/>
</dbReference>
<dbReference type="InterPro" id="IPR040899">
    <property type="entry name" value="Fas_alpha_ACP"/>
</dbReference>
<dbReference type="InterPro" id="IPR047224">
    <property type="entry name" value="FAS_alpha_su_C"/>
</dbReference>
<dbReference type="InterPro" id="IPR026025">
    <property type="entry name" value="FAS_alpha_yeast"/>
</dbReference>
<dbReference type="InterPro" id="IPR041550">
    <property type="entry name" value="FASI_helical"/>
</dbReference>
<dbReference type="InterPro" id="IPR050830">
    <property type="entry name" value="Fungal_FAS"/>
</dbReference>
<dbReference type="InterPro" id="IPR018201">
    <property type="entry name" value="Ketoacyl_synth_AS"/>
</dbReference>
<dbReference type="InterPro" id="IPR014031">
    <property type="entry name" value="Ketoacyl_synth_C"/>
</dbReference>
<dbReference type="InterPro" id="IPR014030">
    <property type="entry name" value="Ketoacyl_synth_N"/>
</dbReference>
<dbReference type="InterPro" id="IPR036291">
    <property type="entry name" value="NAD(P)-bd_dom_sf"/>
</dbReference>
<dbReference type="InterPro" id="IPR020841">
    <property type="entry name" value="PKS_Beta-ketoAc_synthase_dom"/>
</dbReference>
<dbReference type="InterPro" id="IPR009081">
    <property type="entry name" value="PP-bd_ACP"/>
</dbReference>
<dbReference type="InterPro" id="IPR004568">
    <property type="entry name" value="Ppantetheine-prot_Trfase_dom"/>
</dbReference>
<dbReference type="InterPro" id="IPR016039">
    <property type="entry name" value="Thiolase-like"/>
</dbReference>
<dbReference type="NCBIfam" id="TIGR00556">
    <property type="entry name" value="pantethn_trn"/>
    <property type="match status" value="1"/>
</dbReference>
<dbReference type="PANTHER" id="PTHR10982:SF21">
    <property type="entry name" value="FATTY ACID SYNTHASE SUBUNIT BETA"/>
    <property type="match status" value="1"/>
</dbReference>
<dbReference type="PANTHER" id="PTHR10982">
    <property type="entry name" value="MALONYL COA-ACYL CARRIER PROTEIN TRANSACYLASE"/>
    <property type="match status" value="1"/>
</dbReference>
<dbReference type="Pfam" id="PF01648">
    <property type="entry name" value="ACPS"/>
    <property type="match status" value="1"/>
</dbReference>
<dbReference type="Pfam" id="PF18325">
    <property type="entry name" value="Fas_alpha_ACP"/>
    <property type="match status" value="1"/>
</dbReference>
<dbReference type="Pfam" id="PF18314">
    <property type="entry name" value="FAS_I_H"/>
    <property type="match status" value="1"/>
</dbReference>
<dbReference type="Pfam" id="PF00109">
    <property type="entry name" value="ketoacyl-synt"/>
    <property type="match status" value="1"/>
</dbReference>
<dbReference type="Pfam" id="PF02801">
    <property type="entry name" value="Ketoacyl-synt_C"/>
    <property type="match status" value="1"/>
</dbReference>
<dbReference type="PIRSF" id="PIRSF000454">
    <property type="entry name" value="FAS_yeast_alpha"/>
    <property type="match status" value="1"/>
</dbReference>
<dbReference type="SUPFAM" id="SSF56214">
    <property type="entry name" value="4'-phosphopantetheinyl transferase"/>
    <property type="match status" value="1"/>
</dbReference>
<dbReference type="SUPFAM" id="SSF52151">
    <property type="entry name" value="FabD/lysophospholipase-like"/>
    <property type="match status" value="1"/>
</dbReference>
<dbReference type="SUPFAM" id="SSF51735">
    <property type="entry name" value="NAD(P)-binding Rossmann-fold domains"/>
    <property type="match status" value="1"/>
</dbReference>
<dbReference type="SUPFAM" id="SSF53901">
    <property type="entry name" value="Thiolase-like"/>
    <property type="match status" value="2"/>
</dbReference>
<dbReference type="PROSITE" id="PS50075">
    <property type="entry name" value="CARRIER"/>
    <property type="match status" value="1"/>
</dbReference>
<dbReference type="PROSITE" id="PS00606">
    <property type="entry name" value="KS3_1"/>
    <property type="match status" value="1"/>
</dbReference>
<dbReference type="PROSITE" id="PS52004">
    <property type="entry name" value="KS3_2"/>
    <property type="match status" value="1"/>
</dbReference>
<dbReference type="PROSITE" id="PS00012">
    <property type="entry name" value="PHOSPHOPANTETHEINE"/>
    <property type="match status" value="1"/>
</dbReference>
<sequence length="1887" mass="206947">MKPEVEQELAHILLTELLAYQFASPVRWIETQDVFLKDFNTERVVEIGPSPTLAGMAQRTLKNKYESYDAALSLHREILCYSKDAKEIYYTPDPSELAAKEEPAKEEAPAPTPAASAPAPAAAAPAPVAAAAPAAAAAEIADEPVKASLLLHVLVAHKLKKSLDSIPMSKTIKDLVGGKSTVQNEILGDLGKEFGTTPEKPEETPLEELAETFQDTFSGALGKQSSSLLSRLISSKMPGGFTITVARKYLQTRWGLPSGRQDGVLLVALSNEPAARLGSEADAKAFLDSMAQKYASIVGVDLSSAASASGAAGAGAAAGAAMIDAGALEEITKDHKVLARQQLQVLARYLKMDLDNGERKFLKEKDTVAELQAQLDYLNAELGEFFVNGVATSFSRKKARTFDSSWNWAKQSLLSLYFEIIHGVLKNVDREVVSEAINIMNRSNDALIKFMEYHISNTDETKGENYQLVKTLGEQLIENCKQVLDVDPVYKDVAKPTGPKTAIDKNGNITYSEEPREKVRKLSQYVQEMALGGPITKESQPTIEEDLTRVYKAISAQADKQDISSSTRVEFEKLYSDLMKFLESSKEIDPSQTTQLAGMDVEDALDKDSTKEVASLPNKSTISKTVSSTIPRETIPFLHLRKKTPAGDWKYDRQLSSLFLDGLEKAAFNGVTFKDKYVLITGAGKGSIGAEVLQGLLQGGAKVVVTTSRFSKQVTDYYQSIYAKYGAKGSTLIVVPFNQGSKQDVEALIEFIYDTEKNGGLGWDLDAIIPFAAIPEQGIELEHIDSKSEFAHRIMLTNILRMMGCVKKQKSARGIETRPAQVILPMSPNHGTFGGDGMYSESKLSLETLFNRWHSESWANQLTVCGAIIGWTRGTGLMSANNIIAEGIEKMGVRTFSQKEMAFNLLGLLTPEVVELCQKSPVMADLNGGLQFVPELKEFTAKLRKELVETSEVRKAVSIETALEHKVVNGNSADAAYAQVEIQPRANIQLDFPELKPYKQVKQIAPAELEGLLDLERVIVVTGFAEVGPWGSARTRWEMEAFGEFSLEGCVEMAWIMGFISYHNGNLKGRPYTGWVDSKTKEPVDDKDVKAKYETSILEHSGIRLIEPELFNGYNPEKKEMIQEVIVEEDLEPFEASKETAEQFKHQHGDKVDIFEIPETGEYSVKLLKGATLYIPKALRFDRLVAGQIPTGWNAKTYGISDDIISQVDPITLFVLVSVVEAFIASGITDPYEMYKYVHVSEVGNCSGSGMGGVSALRGMFKDRFKDEPVQNDILQESFINTMSAWVNMLLISSSGPIKTPVGACATSVESVDIGVETILSGKARICIVGGYDDFQEEGSFEFGNMKATSNTLEEFEHGRTPAEMSRPATTTRNGFMEAQGAGIQIIMQADLALKMGVPIYGIVAMAATATDKIGRSVPAPGKGILTTAREHHSSVKYASPNLNMKYRKRQLVTREAQIKDWVENELEALKLEAEEIPSEDQNEFLLERTREIHNEAESQLRAAQQQWGNDFYKRDPRIAPLRGALATYGLTIDDLGVASFHGTSTKANDKNESATINEMMKHLGRSEGNPVIGVFQKFLTGHPKGAAGAWMMNGALQILNSGIIPGNRNADNVDKILEQFEYVLYPSKTLKTDGVRAVSITSFGFGQKGGQAIVVHPDYLYGAITEDRYNEYVAKVSAREKSAYKFFHNGMIYNKLFVSKEHAPYTDELEEDVYLDPLARVSKDKKSGSLTFNSKNIQSKDSYINANTIETAKMIENMTKEKVSNGGVGVDVELITSINVENDTFIERNFTPQEIEYCSAQPSVQSSFAGTWSAKEAVFKSLGVKSLGGGAALKDIEIVRVNKNAPAVELHGNAKKAAEEAGVTDVKVSISHDDLQAVAVAVSTKK</sequence>
<comment type="function">
    <text>Fatty acid synthetase catalyzes the formation of long-chain fatty acids from acetyl-CoA, malonyl-CoA and NADPH. The alpha subunit contains domains for: acyl carrier protein, 3-oxoacyl-[acyl-carrier-protein] reductase, and 3-oxoacyl-[acyl-carrier-protein] synthase. This subunit coordinates the binding of the six beta subunits to the enzyme complex.</text>
</comment>
<comment type="catalytic activity">
    <reaction>
        <text>acetyl-CoA + n malonyl-CoA + 2n NADPH + 4n H(+) = a long-chain-acyl-CoA + n CoA + n CO2 + 2n NADP(+).</text>
        <dbReference type="EC" id="2.3.1.86"/>
    </reaction>
</comment>
<comment type="catalytic activity">
    <reaction>
        <text>a fatty acyl-[ACP] + malonyl-[ACP] + H(+) = a 3-oxoacyl-[ACP] + holo-[ACP] + CO2</text>
        <dbReference type="Rhea" id="RHEA:22836"/>
        <dbReference type="Rhea" id="RHEA-COMP:9623"/>
        <dbReference type="Rhea" id="RHEA-COMP:9685"/>
        <dbReference type="Rhea" id="RHEA-COMP:9916"/>
        <dbReference type="Rhea" id="RHEA-COMP:14125"/>
        <dbReference type="ChEBI" id="CHEBI:15378"/>
        <dbReference type="ChEBI" id="CHEBI:16526"/>
        <dbReference type="ChEBI" id="CHEBI:64479"/>
        <dbReference type="ChEBI" id="CHEBI:78449"/>
        <dbReference type="ChEBI" id="CHEBI:78776"/>
        <dbReference type="ChEBI" id="CHEBI:138651"/>
        <dbReference type="EC" id="2.3.1.41"/>
    </reaction>
</comment>
<comment type="catalytic activity">
    <reaction>
        <text>a (3R)-hydroxyacyl-[ACP] + NADP(+) = a 3-oxoacyl-[ACP] + NADPH + H(+)</text>
        <dbReference type="Rhea" id="RHEA:17397"/>
        <dbReference type="Rhea" id="RHEA-COMP:9916"/>
        <dbReference type="Rhea" id="RHEA-COMP:9945"/>
        <dbReference type="ChEBI" id="CHEBI:15378"/>
        <dbReference type="ChEBI" id="CHEBI:57783"/>
        <dbReference type="ChEBI" id="CHEBI:58349"/>
        <dbReference type="ChEBI" id="CHEBI:78776"/>
        <dbReference type="ChEBI" id="CHEBI:78827"/>
        <dbReference type="EC" id="1.1.1.100"/>
    </reaction>
</comment>
<comment type="activity regulation">
    <text evidence="7">Inhibited by cerulenin by covalent binding to active site of the ketoacyl synthase (KS) region.</text>
</comment>
<comment type="subunit">
    <text evidence="5 6 7 8">[Alpha(6)beta(6)] hexamers of two multifunctional subunits (alpha and beta).</text>
</comment>
<comment type="interaction">
    <interactant intactId="EBI-6806">
        <id>P19097</id>
    </interactant>
    <interactant intactId="EBI-6795">
        <id>P07149</id>
        <label>FAS1</label>
    </interactant>
    <organismsDiffer>false</organismsDiffer>
    <experiments>10</experiments>
</comment>
<comment type="PTM">
    <text>4'-phosphopantetheine is transferred from CoA to a specific serine of the Acyl carrier domain by the C-terminal PPT domain. This modification is essential for activity because fatty acids are bound in thioester linkage to the sulfhydryl of the prosthetic group.</text>
</comment>
<comment type="miscellaneous">
    <text evidence="4">Present with 17000 molecules/cell in log phase SD medium.</text>
</comment>
<comment type="similarity">
    <text evidence="10">Belongs to the thiolase-like superfamily. Fungal fatty acid synthetase subunit alpha family.</text>
</comment>
<reference key="1">
    <citation type="journal article" date="1988" name="J. Biol. Chem.">
        <title>Primary structure of the multifunctional alpha subunit protein of yeast fatty acid synthase derived from FAS2 gene sequence.</title>
        <authorList>
            <person name="Mohamed A.H."/>
            <person name="Chirala S.S."/>
            <person name="Mody N.H."/>
            <person name="Huang W.Y."/>
            <person name="Wakil S.J."/>
        </authorList>
    </citation>
    <scope>NUCLEOTIDE SEQUENCE [GENOMIC DNA]</scope>
</reference>
<reference key="2">
    <citation type="submission" date="1994-01" db="EMBL/GenBank/DDBJ databases">
        <authorList>
            <person name="Schueller H.-J."/>
        </authorList>
    </citation>
    <scope>NUCLEOTIDE SEQUENCE [GENOMIC DNA]</scope>
    <source>
        <strain>ATCC 26786 / X2180-1A</strain>
    </source>
</reference>
<reference key="3">
    <citation type="journal article" date="1997" name="Nature">
        <title>The nucleotide sequence of Saccharomyces cerevisiae chromosome XVI.</title>
        <authorList>
            <person name="Bussey H."/>
            <person name="Storms R.K."/>
            <person name="Ahmed A."/>
            <person name="Albermann K."/>
            <person name="Allen E."/>
            <person name="Ansorge W."/>
            <person name="Araujo R."/>
            <person name="Aparicio A."/>
            <person name="Barrell B.G."/>
            <person name="Badcock K."/>
            <person name="Benes V."/>
            <person name="Botstein D."/>
            <person name="Bowman S."/>
            <person name="Brueckner M."/>
            <person name="Carpenter J."/>
            <person name="Cherry J.M."/>
            <person name="Chung E."/>
            <person name="Churcher C.M."/>
            <person name="Coster F."/>
            <person name="Davis K."/>
            <person name="Davis R.W."/>
            <person name="Dietrich F.S."/>
            <person name="Delius H."/>
            <person name="DiPaolo T."/>
            <person name="Dubois E."/>
            <person name="Duesterhoeft A."/>
            <person name="Duncan M."/>
            <person name="Floeth M."/>
            <person name="Fortin N."/>
            <person name="Friesen J.D."/>
            <person name="Fritz C."/>
            <person name="Goffeau A."/>
            <person name="Hall J."/>
            <person name="Hebling U."/>
            <person name="Heumann K."/>
            <person name="Hilbert H."/>
            <person name="Hillier L.W."/>
            <person name="Hunicke-Smith S."/>
            <person name="Hyman R.W."/>
            <person name="Johnston M."/>
            <person name="Kalman S."/>
            <person name="Kleine K."/>
            <person name="Komp C."/>
            <person name="Kurdi O."/>
            <person name="Lashkari D."/>
            <person name="Lew H."/>
            <person name="Lin A."/>
            <person name="Lin D."/>
            <person name="Louis E.J."/>
            <person name="Marathe R."/>
            <person name="Messenguy F."/>
            <person name="Mewes H.-W."/>
            <person name="Mirtipati S."/>
            <person name="Moestl D."/>
            <person name="Mueller-Auer S."/>
            <person name="Namath A."/>
            <person name="Nentwich U."/>
            <person name="Oefner P."/>
            <person name="Pearson D."/>
            <person name="Petel F.X."/>
            <person name="Pohl T.M."/>
            <person name="Purnelle B."/>
            <person name="Rajandream M.A."/>
            <person name="Rechmann S."/>
            <person name="Rieger M."/>
            <person name="Riles L."/>
            <person name="Roberts D."/>
            <person name="Schaefer M."/>
            <person name="Scharfe M."/>
            <person name="Scherens B."/>
            <person name="Schramm S."/>
            <person name="Schroeder M."/>
            <person name="Sdicu A.-M."/>
            <person name="Tettelin H."/>
            <person name="Urrestarazu L.A."/>
            <person name="Ushinsky S."/>
            <person name="Vierendeels F."/>
            <person name="Vissers S."/>
            <person name="Voss H."/>
            <person name="Walsh S.V."/>
            <person name="Wambutt R."/>
            <person name="Wang Y."/>
            <person name="Wedler E."/>
            <person name="Wedler H."/>
            <person name="Winnett E."/>
            <person name="Zhong W.-W."/>
            <person name="Zollner A."/>
            <person name="Vo D.H."/>
            <person name="Hani J."/>
        </authorList>
    </citation>
    <scope>NUCLEOTIDE SEQUENCE [LARGE SCALE GENOMIC DNA]</scope>
    <source>
        <strain>ATCC 204508 / S288c</strain>
    </source>
</reference>
<reference key="4">
    <citation type="journal article" date="2014" name="G3 (Bethesda)">
        <title>The reference genome sequence of Saccharomyces cerevisiae: Then and now.</title>
        <authorList>
            <person name="Engel S.R."/>
            <person name="Dietrich F.S."/>
            <person name="Fisk D.G."/>
            <person name="Binkley G."/>
            <person name="Balakrishnan R."/>
            <person name="Costanzo M.C."/>
            <person name="Dwight S.S."/>
            <person name="Hitz B.C."/>
            <person name="Karra K."/>
            <person name="Nash R.S."/>
            <person name="Weng S."/>
            <person name="Wong E.D."/>
            <person name="Lloyd P."/>
            <person name="Skrzypek M.S."/>
            <person name="Miyasato S.R."/>
            <person name="Simison M."/>
            <person name="Cherry J.M."/>
        </authorList>
    </citation>
    <scope>GENOME REANNOTATION</scope>
    <source>
        <strain>ATCC 204508 / S288c</strain>
    </source>
</reference>
<reference key="5">
    <citation type="journal article" date="1994" name="Mol. Gen. Genet.">
        <title>Cerulenin-resistant mutants of Saccharomyces cerevisiae with an altered fatty acid synthase gene.</title>
        <authorList>
            <person name="Inokoshi J."/>
            <person name="Tomoda H."/>
            <person name="Hashimoto H."/>
            <person name="Watanabe A."/>
            <person name="Takeshima H."/>
            <person name="Omura S."/>
        </authorList>
    </citation>
    <scope>MUTAGENESIS OF GLY-1250</scope>
    <source>
        <strain>ATCC 204508 / S288c</strain>
    </source>
</reference>
<reference key="6">
    <citation type="journal article" date="2003" name="Nature">
        <title>Global analysis of protein expression in yeast.</title>
        <authorList>
            <person name="Ghaemmaghami S."/>
            <person name="Huh W.-K."/>
            <person name="Bower K."/>
            <person name="Howson R.W."/>
            <person name="Belle A."/>
            <person name="Dephoure N."/>
            <person name="O'Shea E.K."/>
            <person name="Weissman J.S."/>
        </authorList>
    </citation>
    <scope>LEVEL OF PROTEIN EXPRESSION [LARGE SCALE ANALYSIS]</scope>
</reference>
<reference key="7">
    <citation type="journal article" date="2005" name="Mol. Cell. Proteomics">
        <title>Quantitative phosphoproteomics applied to the yeast pheromone signaling pathway.</title>
        <authorList>
            <person name="Gruhler A."/>
            <person name="Olsen J.V."/>
            <person name="Mohammed S."/>
            <person name="Mortensen P."/>
            <person name="Faergeman N.J."/>
            <person name="Mann M."/>
            <person name="Jensen O.N."/>
        </authorList>
    </citation>
    <scope>PHOSPHORYLATION [LARGE SCALE ANALYSIS] AT SER-50</scope>
    <scope>IDENTIFICATION BY MASS SPECTROMETRY [LARGE SCALE ANALYSIS]</scope>
    <source>
        <strain>YAL6B</strain>
    </source>
</reference>
<reference key="8">
    <citation type="journal article" date="2007" name="J. Proteome Res.">
        <title>Large-scale phosphorylation analysis of alpha-factor-arrested Saccharomyces cerevisiae.</title>
        <authorList>
            <person name="Li X."/>
            <person name="Gerber S.A."/>
            <person name="Rudner A.D."/>
            <person name="Beausoleil S.A."/>
            <person name="Haas W."/>
            <person name="Villen J."/>
            <person name="Elias J.E."/>
            <person name="Gygi S.P."/>
        </authorList>
    </citation>
    <scope>PHOSPHORYLATION [LARGE SCALE ANALYSIS] AT SER-958 AND SER-1440</scope>
    <scope>IDENTIFICATION BY MASS SPECTROMETRY [LARGE SCALE ANALYSIS]</scope>
    <source>
        <strain>ADR376</strain>
    </source>
</reference>
<reference key="9">
    <citation type="journal article" date="2007" name="Mol. Cell. Proteomics">
        <title>Profiling phosphoproteins of yeast mitochondria reveals a role of phosphorylation in assembly of the ATP synthase.</title>
        <authorList>
            <person name="Reinders J."/>
            <person name="Wagner K."/>
            <person name="Zahedi R.P."/>
            <person name="Stojanovski D."/>
            <person name="Eyrich B."/>
            <person name="van der Laan M."/>
            <person name="Rehling P."/>
            <person name="Sickmann A."/>
            <person name="Pfanner N."/>
            <person name="Meisinger C."/>
        </authorList>
    </citation>
    <scope>IDENTIFICATION BY MASS SPECTROMETRY [LARGE SCALE ANALYSIS]</scope>
    <source>
        <strain>ATCC 76625 / YPH499</strain>
    </source>
</reference>
<reference key="10">
    <citation type="journal article" date="2008" name="Mol. Cell. Proteomics">
        <title>A multidimensional chromatography technology for in-depth phosphoproteome analysis.</title>
        <authorList>
            <person name="Albuquerque C.P."/>
            <person name="Smolka M.B."/>
            <person name="Payne S.H."/>
            <person name="Bafna V."/>
            <person name="Eng J."/>
            <person name="Zhou H."/>
        </authorList>
    </citation>
    <scope>IDENTIFICATION BY MASS SPECTROMETRY [LARGE SCALE ANALYSIS]</scope>
</reference>
<reference key="11">
    <citation type="journal article" date="2009" name="Science">
        <title>Global analysis of Cdk1 substrate phosphorylation sites provides insights into evolution.</title>
        <authorList>
            <person name="Holt L.J."/>
            <person name="Tuch B.B."/>
            <person name="Villen J."/>
            <person name="Johnson A.D."/>
            <person name="Gygi S.P."/>
            <person name="Morgan D.O."/>
        </authorList>
    </citation>
    <scope>PHOSPHORYLATION [LARGE SCALE ANALYSIS] AT SER-523</scope>
    <scope>IDENTIFICATION BY MASS SPECTROMETRY [LARGE SCALE ANALYSIS]</scope>
</reference>
<reference key="12">
    <citation type="journal article" date="2012" name="Proteomics">
        <title>Sites of ubiquitin attachment in Saccharomyces cerevisiae.</title>
        <authorList>
            <person name="Starita L.M."/>
            <person name="Lo R.S."/>
            <person name="Eng J.K."/>
            <person name="von Haller P.D."/>
            <person name="Fields S."/>
        </authorList>
    </citation>
    <scope>UBIQUITINATION [LARGE SCALE ANALYSIS] AT LYS-37</scope>
    <scope>IDENTIFICATION BY MASS SPECTROMETRY [LARGE SCALE ANALYSIS]</scope>
</reference>
<reference key="13">
    <citation type="journal article" date="2007" name="Cell">
        <title>The crystal structure of yeast fatty acid synthase, a cellular machine with eight active sites working together.</title>
        <authorList>
            <person name="Lomakin I.B."/>
            <person name="Xiong Y."/>
            <person name="Steitz T.A."/>
        </authorList>
    </citation>
    <scope>X-RAY CRYSTALLOGRAPHY (4.0 ANGSTROMS) OF 671-1744 IN COMPLEX WITH FAS1</scope>
    <scope>SUBUNIT</scope>
</reference>
<reference key="14">
    <citation type="journal article" date="2007" name="Science">
        <title>Structural basis for substrate delivery by acyl carrier protein in the yeast fatty acid synthase.</title>
        <authorList>
            <person name="Leibundgut M."/>
            <person name="Jenni S."/>
            <person name="Frick C."/>
            <person name="Ban N."/>
        </authorList>
    </citation>
    <scope>X-RAY CRYSTALLOGRAPHY (3.1 ANGSTROMS) IN COMPLEX WITH FAS1</scope>
    <scope>SUBUNIT</scope>
    <scope>PHOSPHOPANTETHEINYLATION AT SER-180</scope>
</reference>
<reference key="15">
    <citation type="journal article" date="2008" name="Proc. Natl. Acad. Sci. U.S.A.">
        <title>Inhibition of the fungal fatty acid synthase type I multienzyme complex.</title>
        <authorList>
            <person name="Johansson P."/>
            <person name="Wiltschi B."/>
            <person name="Kumari P."/>
            <person name="Kessler B."/>
            <person name="Vonrhein C."/>
            <person name="Vonck J."/>
            <person name="Oesterhelt D."/>
            <person name="Grininger M."/>
        </authorList>
    </citation>
    <scope>X-RAY CRYSTALLOGRAPHY (4.0 ANGSTROMS) IN COMPLEX WITH FAS1 AND THE INHIBITOR CERULENIN</scope>
    <scope>ACTIVITY REGULATION</scope>
</reference>
<reference key="16">
    <citation type="journal article" date="2009" name="Structure">
        <title>Multimeric options for the auto-activation of the Saccharomyces cerevisiae FAS type I megasynthase.</title>
        <authorList>
            <person name="Johansson P."/>
            <person name="Mulinacci B."/>
            <person name="Koestler C."/>
            <person name="Vollrath R."/>
            <person name="Oesterhelt D."/>
            <person name="Grininger M."/>
        </authorList>
    </citation>
    <scope>X-RAY CRYSTALLOGRAPHY (1.9 ANGSTROMS) OF 1766-1887 IN COMPLEX WITH FAS1 AND ACETYL-COA</scope>
    <scope>MUTAGENESIS OF VAL-1769; GLY-1770; VAL-1771; ASP-1772; VAL-1773; GLU-1774; ARG-1841; VAL-1879 AND VAL-1881</scope>
    <scope>IDENTIFICATION BY MASS SPECTROMETRY</scope>
</reference>
<protein>
    <recommendedName>
        <fullName>Fatty acid synthase subunit alpha</fullName>
        <ecNumber>2.3.1.86</ecNumber>
    </recommendedName>
    <domain>
        <recommendedName>
            <fullName>Acyl carrier</fullName>
        </recommendedName>
    </domain>
    <domain>
        <recommendedName>
            <fullName>3-oxoacyl-[acyl-carrier-protein] reductase</fullName>
            <ecNumber>1.1.1.100</ecNumber>
        </recommendedName>
        <alternativeName>
            <fullName>Beta-ketoacyl reductase</fullName>
        </alternativeName>
    </domain>
    <domain>
        <recommendedName>
            <fullName>3-oxoacyl-[acyl-carrier-protein] synthase</fullName>
            <ecNumber>2.3.1.41</ecNumber>
        </recommendedName>
        <alternativeName>
            <fullName>Beta-ketoacyl synthase</fullName>
        </alternativeName>
    </domain>
</protein>
<feature type="chain" id="PRO_0000180287" description="Fatty acid synthase subunit alpha">
    <location>
        <begin position="1"/>
        <end position="1887"/>
    </location>
</feature>
<feature type="domain" description="Carrier" evidence="1">
    <location>
        <begin position="145"/>
        <end position="220"/>
    </location>
</feature>
<feature type="domain" description="Ketosynthase family 3 (KS3)" evidence="2">
    <location>
        <begin position="1123"/>
        <end position="1657"/>
    </location>
</feature>
<feature type="region of interest" description="Disordered" evidence="3">
    <location>
        <begin position="96"/>
        <end position="120"/>
    </location>
</feature>
<feature type="region of interest" description="Beta-ketoacyl reductase">
    <location>
        <begin position="675"/>
        <end position="874"/>
    </location>
</feature>
<feature type="compositionally biased region" description="Basic and acidic residues" evidence="3">
    <location>
        <begin position="98"/>
        <end position="108"/>
    </location>
</feature>
<feature type="active site" description="For beta-ketoacyl synthase activity" evidence="2">
    <location>
        <position position="1305"/>
    </location>
</feature>
<feature type="active site" description="For beta-ketoacyl synthase activity" evidence="2">
    <location>
        <position position="1542"/>
    </location>
</feature>
<feature type="active site" description="For beta-ketoacyl synthase activity" evidence="2">
    <location>
        <position position="1583"/>
    </location>
</feature>
<feature type="binding site">
    <location>
        <begin position="1772"/>
        <end position="1774"/>
    </location>
    <ligand>
        <name>acetyl-CoA</name>
        <dbReference type="ChEBI" id="CHEBI:57288"/>
    </ligand>
</feature>
<feature type="binding site">
    <location>
        <position position="1772"/>
    </location>
    <ligand>
        <name>Mg(2+)</name>
        <dbReference type="ChEBI" id="CHEBI:18420"/>
    </ligand>
</feature>
<feature type="binding site">
    <location>
        <position position="1773"/>
    </location>
    <ligand>
        <name>Mg(2+)</name>
        <dbReference type="ChEBI" id="CHEBI:18420"/>
    </ligand>
</feature>
<feature type="binding site">
    <location>
        <position position="1774"/>
    </location>
    <ligand>
        <name>Mg(2+)</name>
        <dbReference type="ChEBI" id="CHEBI:18420"/>
    </ligand>
</feature>
<feature type="binding site" evidence="8">
    <location>
        <position position="1798"/>
    </location>
    <ligand>
        <name>acetyl-CoA</name>
        <dbReference type="ChEBI" id="CHEBI:57288"/>
    </ligand>
</feature>
<feature type="binding site" evidence="8">
    <location>
        <position position="1808"/>
    </location>
    <ligand>
        <name>acetyl-CoA</name>
        <dbReference type="ChEBI" id="CHEBI:57288"/>
    </ligand>
</feature>
<feature type="binding site">
    <location>
        <begin position="1817"/>
        <end position="1827"/>
    </location>
    <ligand>
        <name>acetyl-CoA</name>
        <dbReference type="ChEBI" id="CHEBI:57288"/>
    </ligand>
</feature>
<feature type="binding site">
    <location>
        <begin position="1841"/>
        <end position="1844"/>
    </location>
    <ligand>
        <name>acetyl-CoA</name>
        <dbReference type="ChEBI" id="CHEBI:57288"/>
    </ligand>
</feature>
<feature type="binding site">
    <location>
        <begin position="1871"/>
        <end position="1873"/>
    </location>
    <ligand>
        <name>acetyl-CoA</name>
        <dbReference type="ChEBI" id="CHEBI:57288"/>
    </ligand>
</feature>
<feature type="binding site">
    <location>
        <position position="1872"/>
    </location>
    <ligand>
        <name>Mg(2+)</name>
        <dbReference type="ChEBI" id="CHEBI:18420"/>
    </ligand>
</feature>
<feature type="binding site">
    <location>
        <position position="1873"/>
    </location>
    <ligand>
        <name>Mg(2+)</name>
        <dbReference type="ChEBI" id="CHEBI:18420"/>
    </ligand>
</feature>
<feature type="modified residue" description="Phosphoserine" evidence="11">
    <location>
        <position position="50"/>
    </location>
</feature>
<feature type="modified residue" description="O-(pantetheine 4'-phosphoryl)serine" evidence="1 5">
    <location>
        <position position="180"/>
    </location>
</feature>
<feature type="modified residue" description="Phosphoserine" evidence="13">
    <location>
        <position position="523"/>
    </location>
</feature>
<feature type="modified residue" description="Phosphoserine" evidence="12">
    <location>
        <position position="958"/>
    </location>
</feature>
<feature type="modified residue" description="Phosphoserine" evidence="12">
    <location>
        <position position="1440"/>
    </location>
</feature>
<feature type="cross-link" description="Glycyl lysine isopeptide (Lys-Gly) (interchain with G-Cter in ubiquitin)" evidence="14">
    <location>
        <position position="37"/>
    </location>
</feature>
<feature type="mutagenesis site" description="Cerulenin-resistance." evidence="9">
    <original>G</original>
    <variation>S</variation>
    <location>
        <position position="1250"/>
    </location>
</feature>
<feature type="mutagenesis site" description="Does not affect oligomerization; when associated with S-1771 and L-1773 or S-1771; L-1773; S-1879 and E-1881." evidence="8">
    <original>V</original>
    <variation>D</variation>
    <location>
        <position position="1769"/>
    </location>
</feature>
<feature type="mutagenesis site" description="Loss of transferase activity." evidence="8">
    <original>G</original>
    <variation>D</variation>
    <location>
        <position position="1770"/>
    </location>
</feature>
<feature type="mutagenesis site" description="Does not affect oligomerization but lacks transferase activity; when associated with D-1769 and L-1773 or D-1769; L-1773; S-1879 and E-1881." evidence="8">
    <original>V</original>
    <variation>S</variation>
    <location>
        <position position="1771"/>
    </location>
</feature>
<feature type="mutagenesis site" description="Loss of transferase activity; when associated with S-1774." evidence="8">
    <original>D</original>
    <variation>S</variation>
    <location>
        <position position="1772"/>
    </location>
</feature>
<feature type="mutagenesis site" description="Does not affect oligomerization but lacks transferase activity; when associated with D-1769 and S-1771 or D-1769; S-1771; S-1879 and E-1881." evidence="8">
    <original>V</original>
    <variation>L</variation>
    <location>
        <position position="1773"/>
    </location>
</feature>
<feature type="mutagenesis site" description="Loss of transferase activity; when associated with S-1772." evidence="8">
    <original>E</original>
    <variation>S</variation>
    <location>
        <position position="1774"/>
    </location>
</feature>
<feature type="mutagenesis site" description="Loss off transferase activity." evidence="8">
    <original>R</original>
    <variation>A</variation>
    <location>
        <position position="1841"/>
    </location>
</feature>
<feature type="mutagenesis site" description="Does not affect oligomerization but lacks transferase activity; when associated with D-1769; S-1771; L-1773 and E-1881." evidence="8">
    <original>V</original>
    <variation>S</variation>
    <location>
        <position position="1879"/>
    </location>
</feature>
<feature type="mutagenesis site" description="Does not affect oligomerization but lacks transferase activity; when associated with D-1769; S-1771; L-1773 and S-1879." evidence="8">
    <original>V</original>
    <variation>E</variation>
    <location>
        <position position="1881"/>
    </location>
</feature>
<feature type="sequence conflict" description="In Ref. 1; AAA34601." evidence="10" ref="1">
    <original>G</original>
    <variation>GTTGTGG</variation>
    <location>
        <position position="310"/>
    </location>
</feature>
<feature type="sequence conflict" description="In Ref. 1; AAA34601." evidence="10" ref="1">
    <original>T</original>
    <variation>I</variation>
    <location>
        <position position="594"/>
    </location>
</feature>
<feature type="sequence conflict" description="In Ref. 1; AAA34601." evidence="10" ref="1">
    <original>AKLRKELVETSEVRKAVSIETALEHKVVNGNSADAAYAQVEIQPRANIQLDFPELKPYKQVKQIAPAELEGLLDLERVI</original>
    <variation>CLNCVKSWLKLLKLERQFPSKLLWSIRLSMAIALMLHMLKSKFNQELTFNWTSQNRNHTNRLNKLLPLSLRVCWIWKELF</variation>
    <location>
        <begin position="941"/>
        <end position="1019"/>
    </location>
</feature>
<feature type="sequence conflict" description="In Ref. 1; AAA34601." evidence="10" ref="1">
    <original>RWEMEA</original>
    <variation>KMGNGS</variation>
    <location>
        <begin position="1036"/>
        <end position="1041"/>
    </location>
</feature>
<feature type="sequence conflict" description="In Ref. 1; AAA34601." evidence="10" ref="1">
    <original>A</original>
    <variation>S</variation>
    <location>
        <position position="1408"/>
    </location>
</feature>
<feature type="sequence conflict" description="In Ref. 1; AAA34601." evidence="10" ref="1">
    <original>N</original>
    <variation>T</variation>
    <location>
        <position position="1671"/>
    </location>
</feature>
<feature type="helix" evidence="20">
    <location>
        <begin position="3"/>
        <end position="21"/>
    </location>
</feature>
<feature type="helix" evidence="20">
    <location>
        <begin position="28"/>
        <end position="37"/>
    </location>
</feature>
<feature type="strand" evidence="20">
    <location>
        <begin position="42"/>
        <end position="50"/>
    </location>
</feature>
<feature type="helix" evidence="20">
    <location>
        <begin position="53"/>
        <end position="64"/>
    </location>
</feature>
<feature type="helix" evidence="20">
    <location>
        <begin position="66"/>
        <end position="71"/>
    </location>
</feature>
<feature type="strand" evidence="20">
    <location>
        <begin position="77"/>
        <end position="80"/>
    </location>
</feature>
<feature type="turn" evidence="20">
    <location>
        <begin position="81"/>
        <end position="83"/>
    </location>
</feature>
<feature type="helix" evidence="20">
    <location>
        <begin position="85"/>
        <end position="89"/>
    </location>
</feature>
<feature type="helix" evidence="20">
    <location>
        <begin position="147"/>
        <end position="159"/>
    </location>
</feature>
<feature type="strand" evidence="20">
    <location>
        <begin position="163"/>
        <end position="166"/>
    </location>
</feature>
<feature type="strand" evidence="21">
    <location>
        <begin position="168"/>
        <end position="170"/>
    </location>
</feature>
<feature type="helix" evidence="20">
    <location>
        <begin position="172"/>
        <end position="176"/>
    </location>
</feature>
<feature type="helix" evidence="20">
    <location>
        <begin position="181"/>
        <end position="193"/>
    </location>
</feature>
<feature type="helix" evidence="20">
    <location>
        <begin position="201"/>
        <end position="203"/>
    </location>
</feature>
<feature type="helix" evidence="20">
    <location>
        <begin position="206"/>
        <end position="213"/>
    </location>
</feature>
<feature type="turn" evidence="15">
    <location>
        <begin position="214"/>
        <end position="216"/>
    </location>
</feature>
<feature type="helix" evidence="20">
    <location>
        <begin position="225"/>
        <end position="233"/>
    </location>
</feature>
<feature type="turn" evidence="20">
    <location>
        <begin position="234"/>
        <end position="236"/>
    </location>
</feature>
<feature type="helix" evidence="20">
    <location>
        <begin position="243"/>
        <end position="252"/>
    </location>
</feature>
<feature type="helix" evidence="20">
    <location>
        <begin position="258"/>
        <end position="270"/>
    </location>
</feature>
<feature type="strand" evidence="15">
    <location>
        <begin position="274"/>
        <end position="276"/>
    </location>
</feature>
<feature type="helix" evidence="20">
    <location>
        <begin position="280"/>
        <end position="298"/>
    </location>
</feature>
<feature type="helix" evidence="20">
    <location>
        <begin position="330"/>
        <end position="350"/>
    </location>
</feature>
<feature type="helix" evidence="20">
    <location>
        <begin position="356"/>
        <end position="382"/>
    </location>
</feature>
<feature type="helix" evidence="20">
    <location>
        <begin position="384"/>
        <end position="389"/>
    </location>
</feature>
<feature type="helix" evidence="20">
    <location>
        <begin position="396"/>
        <end position="398"/>
    </location>
</feature>
<feature type="strand" evidence="20">
    <location>
        <begin position="400"/>
        <end position="402"/>
    </location>
</feature>
<feature type="helix" evidence="20">
    <location>
        <begin position="405"/>
        <end position="421"/>
    </location>
</feature>
<feature type="helix" evidence="20">
    <location>
        <begin position="431"/>
        <end position="440"/>
    </location>
</feature>
<feature type="helix" evidence="20">
    <location>
        <begin position="445"/>
        <end position="456"/>
    </location>
</feature>
<feature type="helix" evidence="20">
    <location>
        <begin position="460"/>
        <end position="462"/>
    </location>
</feature>
<feature type="helix" evidence="20">
    <location>
        <begin position="464"/>
        <end position="482"/>
    </location>
</feature>
<feature type="strand" evidence="20">
    <location>
        <begin position="484"/>
        <end position="486"/>
    </location>
</feature>
<feature type="strand" evidence="20">
    <location>
        <begin position="497"/>
        <end position="503"/>
    </location>
</feature>
<feature type="strand" evidence="20">
    <location>
        <begin position="509"/>
        <end position="515"/>
    </location>
</feature>
<feature type="helix" evidence="20">
    <location>
        <begin position="522"/>
        <end position="531"/>
    </location>
</feature>
<feature type="turn" evidence="20">
    <location>
        <begin position="534"/>
        <end position="536"/>
    </location>
</feature>
<feature type="turn" evidence="20">
    <location>
        <begin position="605"/>
        <end position="607"/>
    </location>
</feature>
<feature type="helix" evidence="20">
    <location>
        <begin position="609"/>
        <end position="614"/>
    </location>
</feature>
<feature type="strand" evidence="20">
    <location>
        <begin position="616"/>
        <end position="618"/>
    </location>
</feature>
<feature type="turn" evidence="20">
    <location>
        <begin position="626"/>
        <end position="629"/>
    </location>
</feature>
<feature type="strand" evidence="20">
    <location>
        <begin position="637"/>
        <end position="643"/>
    </location>
</feature>
<feature type="strand" evidence="19">
    <location>
        <begin position="645"/>
        <end position="647"/>
    </location>
</feature>
<feature type="strand" evidence="20">
    <location>
        <begin position="649"/>
        <end position="651"/>
    </location>
</feature>
<feature type="helix" evidence="20">
    <location>
        <begin position="653"/>
        <end position="669"/>
    </location>
</feature>
<feature type="strand" evidence="20">
    <location>
        <begin position="677"/>
        <end position="682"/>
    </location>
</feature>
<feature type="strand" evidence="20">
    <location>
        <begin position="685"/>
        <end position="687"/>
    </location>
</feature>
<feature type="helix" evidence="20">
    <location>
        <begin position="688"/>
        <end position="698"/>
    </location>
</feature>
<feature type="strand" evidence="20">
    <location>
        <begin position="702"/>
        <end position="709"/>
    </location>
</feature>
<feature type="helix" evidence="20">
    <location>
        <begin position="712"/>
        <end position="725"/>
    </location>
</feature>
<feature type="strand" evidence="20">
    <location>
        <begin position="731"/>
        <end position="736"/>
    </location>
</feature>
<feature type="helix" evidence="20">
    <location>
        <begin position="742"/>
        <end position="753"/>
    </location>
</feature>
<feature type="turn" evidence="20">
    <location>
        <begin position="756"/>
        <end position="759"/>
    </location>
</feature>
<feature type="strand" evidence="20">
    <location>
        <begin position="766"/>
        <end position="770"/>
    </location>
</feature>
<feature type="helix" evidence="20">
    <location>
        <begin position="781"/>
        <end position="783"/>
    </location>
</feature>
<feature type="helix" evidence="20">
    <location>
        <begin position="786"/>
        <end position="795"/>
    </location>
</feature>
<feature type="helix" evidence="20">
    <location>
        <begin position="797"/>
        <end position="812"/>
    </location>
</feature>
<feature type="strand" evidence="20">
    <location>
        <begin position="820"/>
        <end position="826"/>
    </location>
</feature>
<feature type="strand" evidence="20">
    <location>
        <begin position="830"/>
        <end position="833"/>
    </location>
</feature>
<feature type="helix" evidence="20">
    <location>
        <begin position="839"/>
        <end position="845"/>
    </location>
</feature>
<feature type="helix" evidence="20">
    <location>
        <begin position="846"/>
        <end position="848"/>
    </location>
</feature>
<feature type="helix" evidence="20">
    <location>
        <begin position="849"/>
        <end position="855"/>
    </location>
</feature>
<feature type="turn" evidence="20">
    <location>
        <begin position="859"/>
        <end position="861"/>
    </location>
</feature>
<feature type="strand" evidence="20">
    <location>
        <begin position="862"/>
        <end position="869"/>
    </location>
</feature>
<feature type="turn" evidence="18">
    <location>
        <begin position="876"/>
        <end position="878"/>
    </location>
</feature>
<feature type="helix" evidence="18">
    <location>
        <begin position="879"/>
        <end position="881"/>
    </location>
</feature>
<feature type="helix" evidence="20">
    <location>
        <begin position="885"/>
        <end position="889"/>
    </location>
</feature>
<feature type="turn" evidence="20">
    <location>
        <begin position="890"/>
        <end position="892"/>
    </location>
</feature>
<feature type="helix" evidence="20">
    <location>
        <begin position="898"/>
        <end position="906"/>
    </location>
</feature>
<feature type="helix" evidence="20">
    <location>
        <begin position="907"/>
        <end position="909"/>
    </location>
</feature>
<feature type="helix" evidence="20">
    <location>
        <begin position="911"/>
        <end position="917"/>
    </location>
</feature>
<feature type="strand" evidence="20">
    <location>
        <begin position="922"/>
        <end position="927"/>
    </location>
</feature>
<feature type="helix" evidence="20">
    <location>
        <begin position="930"/>
        <end position="932"/>
    </location>
</feature>
<feature type="strand" evidence="21">
    <location>
        <begin position="933"/>
        <end position="935"/>
    </location>
</feature>
<feature type="helix" evidence="20">
    <location>
        <begin position="936"/>
        <end position="969"/>
    </location>
</feature>
<feature type="turn" evidence="20">
    <location>
        <begin position="970"/>
        <end position="975"/>
    </location>
</feature>
<feature type="helix" evidence="20">
    <location>
        <begin position="998"/>
        <end position="1001"/>
    </location>
</feature>
<feature type="turn" evidence="20">
    <location>
        <begin position="1002"/>
        <end position="1004"/>
    </location>
</feature>
<feature type="helix" evidence="20">
    <location>
        <begin position="1007"/>
        <end position="1009"/>
    </location>
</feature>
<feature type="turn" evidence="20">
    <location>
        <begin position="1010"/>
        <end position="1012"/>
    </location>
</feature>
<feature type="helix" evidence="20">
    <location>
        <begin position="1015"/>
        <end position="1017"/>
    </location>
</feature>
<feature type="strand" evidence="20">
    <location>
        <begin position="1019"/>
        <end position="1028"/>
    </location>
</feature>
<feature type="helix" evidence="20">
    <location>
        <begin position="1033"/>
        <end position="1041"/>
    </location>
</feature>
<feature type="strand" evidence="20">
    <location>
        <begin position="1042"/>
        <end position="1044"/>
    </location>
</feature>
<feature type="helix" evidence="20">
    <location>
        <begin position="1047"/>
        <end position="1056"/>
    </location>
</feature>
<feature type="strand" evidence="20">
    <location>
        <begin position="1059"/>
        <end position="1077"/>
    </location>
</feature>
<feature type="turn" evidence="20">
    <location>
        <begin position="1078"/>
        <end position="1080"/>
    </location>
</feature>
<feature type="helix" evidence="20">
    <location>
        <begin position="1086"/>
        <end position="1088"/>
    </location>
</feature>
<feature type="helix" evidence="20">
    <location>
        <begin position="1089"/>
        <end position="1099"/>
    </location>
</feature>
<feature type="strand" evidence="20">
    <location>
        <begin position="1101"/>
        <end position="1105"/>
    </location>
</feature>
<feature type="helix" evidence="20">
    <location>
        <begin position="1108"/>
        <end position="1110"/>
    </location>
</feature>
<feature type="turn" evidence="20">
    <location>
        <begin position="1111"/>
        <end position="1113"/>
    </location>
</feature>
<feature type="strand" evidence="20">
    <location>
        <begin position="1118"/>
        <end position="1126"/>
    </location>
</feature>
<feature type="strand" evidence="20">
    <location>
        <begin position="1134"/>
        <end position="1136"/>
    </location>
</feature>
<feature type="helix" evidence="20">
    <location>
        <begin position="1138"/>
        <end position="1148"/>
    </location>
</feature>
<feature type="helix" evidence="20">
    <location>
        <begin position="1149"/>
        <end position="1151"/>
    </location>
</feature>
<feature type="strand" evidence="20">
    <location>
        <begin position="1152"/>
        <end position="1156"/>
    </location>
</feature>
<feature type="turn" evidence="20">
    <location>
        <begin position="1158"/>
        <end position="1160"/>
    </location>
</feature>
<feature type="strand" evidence="20">
    <location>
        <begin position="1163"/>
        <end position="1167"/>
    </location>
</feature>
<feature type="strand" evidence="20">
    <location>
        <begin position="1172"/>
        <end position="1179"/>
    </location>
</feature>
<feature type="strand" evidence="20">
    <location>
        <begin position="1185"/>
        <end position="1187"/>
    </location>
</feature>
<feature type="helix" evidence="20">
    <location>
        <begin position="1195"/>
        <end position="1198"/>
    </location>
</feature>
<feature type="helix" evidence="20">
    <location>
        <begin position="1202"/>
        <end position="1207"/>
    </location>
</feature>
<feature type="helix" evidence="20">
    <location>
        <begin position="1210"/>
        <end position="1224"/>
    </location>
</feature>
<feature type="turn" evidence="20">
    <location>
        <begin position="1225"/>
        <end position="1227"/>
    </location>
</feature>
<feature type="helix" evidence="20">
    <location>
        <begin position="1231"/>
        <end position="1236"/>
    </location>
</feature>
<feature type="helix" evidence="20">
    <location>
        <begin position="1240"/>
        <end position="1242"/>
    </location>
</feature>
<feature type="strand" evidence="20">
    <location>
        <begin position="1243"/>
        <end position="1245"/>
    </location>
</feature>
<feature type="strand" evidence="20">
    <location>
        <begin position="1248"/>
        <end position="1251"/>
    </location>
</feature>
<feature type="helix" evidence="20">
    <location>
        <begin position="1254"/>
        <end position="1261"/>
    </location>
</feature>
<feature type="turn" evidence="20">
    <location>
        <begin position="1262"/>
        <end position="1267"/>
    </location>
</feature>
<feature type="helix" evidence="20">
    <location>
        <begin position="1272"/>
        <end position="1274"/>
    </location>
</feature>
<feature type="turn" evidence="20">
    <location>
        <begin position="1275"/>
        <end position="1278"/>
    </location>
</feature>
<feature type="helix" evidence="20">
    <location>
        <begin position="1282"/>
        <end position="1290"/>
    </location>
</feature>
<feature type="helix" evidence="20">
    <location>
        <begin position="1304"/>
        <end position="1306"/>
    </location>
</feature>
<feature type="helix" evidence="20">
    <location>
        <begin position="1307"/>
        <end position="1320"/>
    </location>
</feature>
<feature type="strand" evidence="20">
    <location>
        <begin position="1325"/>
        <end position="1333"/>
    </location>
</feature>
<feature type="helix" evidence="20">
    <location>
        <begin position="1337"/>
        <end position="1345"/>
    </location>
</feature>
<feature type="helix" evidence="20">
    <location>
        <begin position="1352"/>
        <end position="1357"/>
    </location>
</feature>
<feature type="helix" evidence="20">
    <location>
        <begin position="1362"/>
        <end position="1364"/>
    </location>
</feature>
<feature type="strand" evidence="20">
    <location>
        <begin position="1381"/>
        <end position="1389"/>
    </location>
</feature>
<feature type="helix" evidence="20">
    <location>
        <begin position="1390"/>
        <end position="1396"/>
    </location>
</feature>
<feature type="strand" evidence="20">
    <location>
        <begin position="1402"/>
        <end position="1410"/>
    </location>
</feature>
<feature type="helix" evidence="20">
    <location>
        <begin position="1424"/>
        <end position="1429"/>
    </location>
</feature>
<feature type="turn" evidence="20">
    <location>
        <begin position="1441"/>
        <end position="1443"/>
    </location>
</feature>
<feature type="helix" evidence="20">
    <location>
        <begin position="1445"/>
        <end position="1467"/>
    </location>
</feature>
<feature type="helix" evidence="20">
    <location>
        <begin position="1469"/>
        <end position="1476"/>
    </location>
</feature>
<feature type="turn" evidence="18">
    <location>
        <begin position="1479"/>
        <end position="1481"/>
    </location>
</feature>
<feature type="helix" evidence="20">
    <location>
        <begin position="1482"/>
        <end position="1508"/>
    </location>
</feature>
<feature type="turn" evidence="20">
    <location>
        <begin position="1512"/>
        <end position="1515"/>
    </location>
</feature>
<feature type="strand" evidence="16">
    <location>
        <begin position="1517"/>
        <end position="1519"/>
    </location>
</feature>
<feature type="helix" evidence="20">
    <location>
        <begin position="1521"/>
        <end position="1527"/>
    </location>
</feature>
<feature type="turn" evidence="20">
    <location>
        <begin position="1528"/>
        <end position="1530"/>
    </location>
</feature>
<feature type="helix" evidence="20">
    <location>
        <begin position="1533"/>
        <end position="1535"/>
    </location>
</feature>
<feature type="strand" evidence="20">
    <location>
        <begin position="1536"/>
        <end position="1540"/>
    </location>
</feature>
<feature type="helix" evidence="20">
    <location>
        <begin position="1547"/>
        <end position="1563"/>
    </location>
</feature>
<feature type="strand" evidence="20">
    <location>
        <begin position="1572"/>
        <end position="1575"/>
    </location>
</feature>
<feature type="helix" evidence="20">
    <location>
        <begin position="1578"/>
        <end position="1581"/>
    </location>
</feature>
<feature type="helix" evidence="20">
    <location>
        <begin position="1585"/>
        <end position="1587"/>
    </location>
</feature>
<feature type="helix" evidence="20">
    <location>
        <begin position="1588"/>
        <end position="1600"/>
    </location>
</feature>
<feature type="strand" evidence="20">
    <location>
        <begin position="1612"/>
        <end position="1614"/>
    </location>
</feature>
<feature type="helix" evidence="20">
    <location>
        <begin position="1616"/>
        <end position="1620"/>
    </location>
</feature>
<feature type="strand" evidence="20">
    <location>
        <begin position="1638"/>
        <end position="1645"/>
    </location>
</feature>
<feature type="turn" evidence="20">
    <location>
        <begin position="1646"/>
        <end position="1648"/>
    </location>
</feature>
<feature type="strand" evidence="20">
    <location>
        <begin position="1649"/>
        <end position="1656"/>
    </location>
</feature>
<feature type="helix" evidence="20">
    <location>
        <begin position="1659"/>
        <end position="1662"/>
    </location>
</feature>
<feature type="helix" evidence="20">
    <location>
        <begin position="1667"/>
        <end position="1693"/>
    </location>
</feature>
<feature type="turn" evidence="20">
    <location>
        <begin position="1708"/>
        <end position="1710"/>
    </location>
</feature>
<feature type="helix" evidence="20">
    <location>
        <begin position="1711"/>
        <end position="1716"/>
    </location>
</feature>
<feature type="turn" evidence="20">
    <location>
        <begin position="1726"/>
        <end position="1728"/>
    </location>
</feature>
<feature type="strand" evidence="20">
    <location>
        <begin position="1730"/>
        <end position="1732"/>
    </location>
</feature>
<feature type="helix" evidence="20">
    <location>
        <begin position="1735"/>
        <end position="1737"/>
    </location>
</feature>
<feature type="helix" evidence="20">
    <location>
        <begin position="1741"/>
        <end position="1744"/>
    </location>
</feature>
<feature type="helix" evidence="20">
    <location>
        <begin position="1747"/>
        <end position="1759"/>
    </location>
</feature>
<feature type="turn" evidence="20">
    <location>
        <begin position="1761"/>
        <end position="1763"/>
    </location>
</feature>
<feature type="strand" evidence="17">
    <location>
        <begin position="1769"/>
        <end position="1775"/>
    </location>
</feature>
<feature type="helix" evidence="17">
    <location>
        <begin position="1776"/>
        <end position="1778"/>
    </location>
</feature>
<feature type="helix" evidence="17">
    <location>
        <begin position="1784"/>
        <end position="1790"/>
    </location>
</feature>
<feature type="helix" evidence="17">
    <location>
        <begin position="1793"/>
        <end position="1800"/>
    </location>
</feature>
<feature type="strand" evidence="17">
    <location>
        <begin position="1802"/>
        <end position="1804"/>
    </location>
</feature>
<feature type="helix" evidence="17">
    <location>
        <begin position="1805"/>
        <end position="1823"/>
    </location>
</feature>
<feature type="strand" evidence="19">
    <location>
        <begin position="1828"/>
        <end position="1831"/>
    </location>
</feature>
<feature type="helix" evidence="19">
    <location>
        <begin position="1834"/>
        <end position="1836"/>
    </location>
</feature>
<feature type="strand" evidence="17">
    <location>
        <begin position="1837"/>
        <end position="1842"/>
    </location>
</feature>
<feature type="strand" evidence="17">
    <location>
        <begin position="1845"/>
        <end position="1851"/>
    </location>
</feature>
<feature type="helix" evidence="17">
    <location>
        <begin position="1853"/>
        <end position="1860"/>
    </location>
</feature>
<feature type="turn" evidence="17">
    <location>
        <begin position="1861"/>
        <end position="1863"/>
    </location>
</feature>
<feature type="strand" evidence="17">
    <location>
        <begin position="1866"/>
        <end position="1873"/>
    </location>
</feature>
<feature type="strand" evidence="17">
    <location>
        <begin position="1875"/>
        <end position="1885"/>
    </location>
</feature>
<gene>
    <name type="primary">FAS2</name>
    <name type="ordered locus">YPL231W</name>
    <name type="ORF">P1409</name>
</gene>
<proteinExistence type="evidence at protein level"/>
<evidence type="ECO:0000255" key="1">
    <source>
        <dbReference type="PROSITE-ProRule" id="PRU00258"/>
    </source>
</evidence>
<evidence type="ECO:0000255" key="2">
    <source>
        <dbReference type="PROSITE-ProRule" id="PRU01348"/>
    </source>
</evidence>
<evidence type="ECO:0000256" key="3">
    <source>
        <dbReference type="SAM" id="MobiDB-lite"/>
    </source>
</evidence>
<evidence type="ECO:0000269" key="4">
    <source>
    </source>
</evidence>
<evidence type="ECO:0000269" key="5">
    <source>
    </source>
</evidence>
<evidence type="ECO:0000269" key="6">
    <source>
    </source>
</evidence>
<evidence type="ECO:0000269" key="7">
    <source>
    </source>
</evidence>
<evidence type="ECO:0000269" key="8">
    <source>
    </source>
</evidence>
<evidence type="ECO:0000269" key="9">
    <source>
    </source>
</evidence>
<evidence type="ECO:0000305" key="10"/>
<evidence type="ECO:0007744" key="11">
    <source>
    </source>
</evidence>
<evidence type="ECO:0007744" key="12">
    <source>
    </source>
</evidence>
<evidence type="ECO:0007744" key="13">
    <source>
    </source>
</evidence>
<evidence type="ECO:0007744" key="14">
    <source>
    </source>
</evidence>
<evidence type="ECO:0007829" key="15">
    <source>
        <dbReference type="PDB" id="2ML8"/>
    </source>
</evidence>
<evidence type="ECO:0007829" key="16">
    <source>
        <dbReference type="PDB" id="2UV8"/>
    </source>
</evidence>
<evidence type="ECO:0007829" key="17">
    <source>
        <dbReference type="PDB" id="2WAS"/>
    </source>
</evidence>
<evidence type="ECO:0007829" key="18">
    <source>
        <dbReference type="PDB" id="8PRV"/>
    </source>
</evidence>
<evidence type="ECO:0007829" key="19">
    <source>
        <dbReference type="PDB" id="8PS9"/>
    </source>
</evidence>
<evidence type="ECO:0007829" key="20">
    <source>
        <dbReference type="PDB" id="8PSF"/>
    </source>
</evidence>
<evidence type="ECO:0007829" key="21">
    <source>
        <dbReference type="PDB" id="8PSK"/>
    </source>
</evidence>
<name>FAS2_YEAST</name>
<keyword id="KW-0002">3D-structure</keyword>
<keyword id="KW-0275">Fatty acid biosynthesis</keyword>
<keyword id="KW-0276">Fatty acid metabolism</keyword>
<keyword id="KW-1017">Isopeptide bond</keyword>
<keyword id="KW-0444">Lipid biosynthesis</keyword>
<keyword id="KW-0443">Lipid metabolism</keyword>
<keyword id="KW-0460">Magnesium</keyword>
<keyword id="KW-0479">Metal-binding</keyword>
<keyword id="KW-0511">Multifunctional enzyme</keyword>
<keyword id="KW-0520">NAD</keyword>
<keyword id="KW-0521">NADP</keyword>
<keyword id="KW-0560">Oxidoreductase</keyword>
<keyword id="KW-0596">Phosphopantetheine</keyword>
<keyword id="KW-0597">Phosphoprotein</keyword>
<keyword id="KW-1185">Reference proteome</keyword>
<keyword id="KW-0808">Transferase</keyword>
<keyword id="KW-0832">Ubl conjugation</keyword>
<organism>
    <name type="scientific">Saccharomyces cerevisiae (strain ATCC 204508 / S288c)</name>
    <name type="common">Baker's yeast</name>
    <dbReference type="NCBI Taxonomy" id="559292"/>
    <lineage>
        <taxon>Eukaryota</taxon>
        <taxon>Fungi</taxon>
        <taxon>Dikarya</taxon>
        <taxon>Ascomycota</taxon>
        <taxon>Saccharomycotina</taxon>
        <taxon>Saccharomycetes</taxon>
        <taxon>Saccharomycetales</taxon>
        <taxon>Saccharomycetaceae</taxon>
        <taxon>Saccharomyces</taxon>
    </lineage>
</organism>
<accession>P19097</accession>
<accession>D6W3D9</accession>
<accession>Q12533</accession>